<organism>
    <name type="scientific">Ipomoea quamoclit</name>
    <name type="common">Cypress vine</name>
    <name type="synonym">Convolvulus pennatus</name>
    <dbReference type="NCBI Taxonomy" id="89660"/>
    <lineage>
        <taxon>Eukaryota</taxon>
        <taxon>Viridiplantae</taxon>
        <taxon>Streptophyta</taxon>
        <taxon>Embryophyta</taxon>
        <taxon>Tracheophyta</taxon>
        <taxon>Spermatophyta</taxon>
        <taxon>Magnoliopsida</taxon>
        <taxon>eudicotyledons</taxon>
        <taxon>Gunneridae</taxon>
        <taxon>Pentapetalae</taxon>
        <taxon>asterids</taxon>
        <taxon>lamiids</taxon>
        <taxon>Solanales</taxon>
        <taxon>Convolvulaceae</taxon>
        <taxon>Ipomoeeae</taxon>
        <taxon>Ipomoea</taxon>
    </lineage>
</organism>
<proteinExistence type="inferred from homology"/>
<geneLocation type="chloroplast"/>
<reference key="1">
    <citation type="journal article" date="2002" name="Am. J. Bot.">
        <title>Monophyly of the Convolvulaceae and circumscription of their major lineages based on DNA sequences of multiple chloroplast loci.</title>
        <authorList>
            <person name="Stefanovic S."/>
            <person name="Krueger L."/>
            <person name="Olmstead R.G."/>
        </authorList>
        <dbReference type="AGRICOLA" id="IND23320510"/>
    </citation>
    <scope>NUCLEOTIDE SEQUENCE [GENOMIC DNA]</scope>
</reference>
<feature type="chain" id="PRO_0000219730" description="Photosystem II reaction center protein L">
    <location>
        <begin position="1"/>
        <end position="38"/>
    </location>
</feature>
<feature type="transmembrane region" description="Helical" evidence="1">
    <location>
        <begin position="17"/>
        <end position="37"/>
    </location>
</feature>
<evidence type="ECO:0000255" key="1">
    <source>
        <dbReference type="HAMAP-Rule" id="MF_01317"/>
    </source>
</evidence>
<accession>Q7H8L2</accession>
<name>PSBL_IPOQU</name>
<dbReference type="EMBL" id="AY100854">
    <property type="protein sequence ID" value="AAM55539.1"/>
    <property type="molecule type" value="Genomic_DNA"/>
</dbReference>
<dbReference type="RefSeq" id="YP_009663411.1">
    <property type="nucleotide sequence ID" value="NC_042941.1"/>
</dbReference>
<dbReference type="SMR" id="Q7H8L2"/>
<dbReference type="GeneID" id="40491634"/>
<dbReference type="GO" id="GO:0009535">
    <property type="term" value="C:chloroplast thylakoid membrane"/>
    <property type="evidence" value="ECO:0007669"/>
    <property type="project" value="UniProtKB-SubCell"/>
</dbReference>
<dbReference type="GO" id="GO:0009539">
    <property type="term" value="C:photosystem II reaction center"/>
    <property type="evidence" value="ECO:0007669"/>
    <property type="project" value="InterPro"/>
</dbReference>
<dbReference type="GO" id="GO:0015979">
    <property type="term" value="P:photosynthesis"/>
    <property type="evidence" value="ECO:0007669"/>
    <property type="project" value="UniProtKB-UniRule"/>
</dbReference>
<dbReference type="HAMAP" id="MF_01317">
    <property type="entry name" value="PSII_PsbL"/>
    <property type="match status" value="1"/>
</dbReference>
<dbReference type="InterPro" id="IPR003372">
    <property type="entry name" value="PSII_PsbL"/>
</dbReference>
<dbReference type="InterPro" id="IPR037266">
    <property type="entry name" value="PSII_PsbL_sf"/>
</dbReference>
<dbReference type="NCBIfam" id="NF001972">
    <property type="entry name" value="PRK00753.1"/>
    <property type="match status" value="1"/>
</dbReference>
<dbReference type="Pfam" id="PF02419">
    <property type="entry name" value="PsbL"/>
    <property type="match status" value="1"/>
</dbReference>
<dbReference type="SUPFAM" id="SSF161017">
    <property type="entry name" value="Photosystem II reaction center protein L, PsbL"/>
    <property type="match status" value="1"/>
</dbReference>
<protein>
    <recommendedName>
        <fullName evidence="1">Photosystem II reaction center protein L</fullName>
        <shortName evidence="1">PSII-L</shortName>
    </recommendedName>
</protein>
<keyword id="KW-0150">Chloroplast</keyword>
<keyword id="KW-0472">Membrane</keyword>
<keyword id="KW-0602">Photosynthesis</keyword>
<keyword id="KW-0604">Photosystem II</keyword>
<keyword id="KW-0934">Plastid</keyword>
<keyword id="KW-0674">Reaction center</keyword>
<keyword id="KW-0793">Thylakoid</keyword>
<keyword id="KW-0812">Transmembrane</keyword>
<keyword id="KW-1133">Transmembrane helix</keyword>
<gene>
    <name evidence="1" type="primary">psbL</name>
</gene>
<sequence length="38" mass="4497">MTQSNPNEQNVELNRTSLYWGLLLIFVLAVLFSNYFFN</sequence>
<comment type="function">
    <text evidence="1">One of the components of the core complex of photosystem II (PSII). PSII is a light-driven water:plastoquinone oxidoreductase that uses light energy to abstract electrons from H(2)O, generating O(2) and a proton gradient subsequently used for ATP formation. It consists of a core antenna complex that captures photons, and an electron transfer chain that converts photonic excitation into a charge separation. This subunit is found at the monomer-monomer interface and is required for correct PSII assembly and/or dimerization.</text>
</comment>
<comment type="subunit">
    <text evidence="1">PSII is composed of 1 copy each of membrane proteins PsbA, PsbB, PsbC, PsbD, PsbE, PsbF, PsbH, PsbI, PsbJ, PsbK, PsbL, PsbM, PsbT, PsbX, PsbY, PsbZ, Psb30/Ycf12, at least 3 peripheral proteins of the oxygen-evolving complex and a large number of cofactors. It forms dimeric complexes.</text>
</comment>
<comment type="subcellular location">
    <subcellularLocation>
        <location evidence="1">Plastid</location>
        <location evidence="1">Chloroplast thylakoid membrane</location>
        <topology evidence="1">Single-pass membrane protein</topology>
    </subcellularLocation>
</comment>
<comment type="similarity">
    <text evidence="1">Belongs to the PsbL family.</text>
</comment>